<gene>
    <name evidence="1" type="primary">fmt</name>
    <name type="ordered locus">cu0978</name>
</gene>
<evidence type="ECO:0000255" key="1">
    <source>
        <dbReference type="HAMAP-Rule" id="MF_00182"/>
    </source>
</evidence>
<protein>
    <recommendedName>
        <fullName evidence="1">Methionyl-tRNA formyltransferase</fullName>
        <ecNumber evidence="1">2.1.2.9</ecNumber>
    </recommendedName>
</protein>
<reference key="1">
    <citation type="journal article" date="2008" name="J. Biotechnol.">
        <title>The lifestyle of Corynebacterium urealyticum derived from its complete genome sequence established by pyrosequencing.</title>
        <authorList>
            <person name="Tauch A."/>
            <person name="Trost E."/>
            <person name="Tilker A."/>
            <person name="Ludewig U."/>
            <person name="Schneiker S."/>
            <person name="Goesmann A."/>
            <person name="Arnold W."/>
            <person name="Bekel T."/>
            <person name="Brinkrolf K."/>
            <person name="Brune I."/>
            <person name="Goetker S."/>
            <person name="Kalinowski J."/>
            <person name="Kamp P.-B."/>
            <person name="Lobo F.P."/>
            <person name="Viehoever P."/>
            <person name="Weisshaar B."/>
            <person name="Soriano F."/>
            <person name="Droege M."/>
            <person name="Puehler A."/>
        </authorList>
    </citation>
    <scope>NUCLEOTIDE SEQUENCE [LARGE SCALE GENOMIC DNA]</scope>
    <source>
        <strain>ATCC 43042 / DSM 7109</strain>
    </source>
</reference>
<sequence length="329" mass="35241">MKILFAGTPKPAAIVLEHLLTDPRLEVLGVITQPDARRGRGRSLHPSPVAEVAEGAGLKVHKWHSLGASSEDAAAVRETLAAYREAGATAVAVVAYGNLIPADLLDAVEHGWVNLHYSLLPRWRGAAPVQAAIAAGDQETGATIFRIEQGLDTGPMLSKKAYEIGIRETAEEVLIELTNSGKSLLADTLVELGEGSATPQPQPEEGATHAPKLHPADARIDFSAPAKVIQRRARAHTPAPGAWCTLDGQRYKFGLMLPVAEGEEFPELAPGQLWADKTRVLVGTGDTPLLVETIQPPGKKMMRAADWARGQQELLAQSPRFDIEEDTAK</sequence>
<proteinExistence type="inferred from homology"/>
<name>FMT_CORU7</name>
<dbReference type="EC" id="2.1.2.9" evidence="1"/>
<dbReference type="EMBL" id="AM942444">
    <property type="protein sequence ID" value="CAQ04938.1"/>
    <property type="molecule type" value="Genomic_DNA"/>
</dbReference>
<dbReference type="RefSeq" id="WP_012360226.1">
    <property type="nucleotide sequence ID" value="NC_010545.1"/>
</dbReference>
<dbReference type="SMR" id="B1VDP0"/>
<dbReference type="STRING" id="504474.cu0978"/>
<dbReference type="GeneID" id="60603757"/>
<dbReference type="KEGG" id="cur:cu0978"/>
<dbReference type="eggNOG" id="COG0223">
    <property type="taxonomic scope" value="Bacteria"/>
</dbReference>
<dbReference type="HOGENOM" id="CLU_033347_2_0_11"/>
<dbReference type="Proteomes" id="UP000001727">
    <property type="component" value="Chromosome"/>
</dbReference>
<dbReference type="GO" id="GO:0005829">
    <property type="term" value="C:cytosol"/>
    <property type="evidence" value="ECO:0007669"/>
    <property type="project" value="TreeGrafter"/>
</dbReference>
<dbReference type="GO" id="GO:0004479">
    <property type="term" value="F:methionyl-tRNA formyltransferase activity"/>
    <property type="evidence" value="ECO:0007669"/>
    <property type="project" value="UniProtKB-UniRule"/>
</dbReference>
<dbReference type="CDD" id="cd08646">
    <property type="entry name" value="FMT_core_Met-tRNA-FMT_N"/>
    <property type="match status" value="1"/>
</dbReference>
<dbReference type="CDD" id="cd08704">
    <property type="entry name" value="Met_tRNA_FMT_C"/>
    <property type="match status" value="1"/>
</dbReference>
<dbReference type="Gene3D" id="3.40.50.12230">
    <property type="match status" value="1"/>
</dbReference>
<dbReference type="HAMAP" id="MF_00182">
    <property type="entry name" value="Formyl_trans"/>
    <property type="match status" value="1"/>
</dbReference>
<dbReference type="InterPro" id="IPR005794">
    <property type="entry name" value="Fmt"/>
</dbReference>
<dbReference type="InterPro" id="IPR005793">
    <property type="entry name" value="Formyl_trans_C"/>
</dbReference>
<dbReference type="InterPro" id="IPR002376">
    <property type="entry name" value="Formyl_transf_N"/>
</dbReference>
<dbReference type="InterPro" id="IPR036477">
    <property type="entry name" value="Formyl_transf_N_sf"/>
</dbReference>
<dbReference type="InterPro" id="IPR011034">
    <property type="entry name" value="Formyl_transferase-like_C_sf"/>
</dbReference>
<dbReference type="InterPro" id="IPR044135">
    <property type="entry name" value="Met-tRNA-FMT_C"/>
</dbReference>
<dbReference type="InterPro" id="IPR041711">
    <property type="entry name" value="Met-tRNA-FMT_N"/>
</dbReference>
<dbReference type="NCBIfam" id="TIGR00460">
    <property type="entry name" value="fmt"/>
    <property type="match status" value="1"/>
</dbReference>
<dbReference type="PANTHER" id="PTHR11138">
    <property type="entry name" value="METHIONYL-TRNA FORMYLTRANSFERASE"/>
    <property type="match status" value="1"/>
</dbReference>
<dbReference type="PANTHER" id="PTHR11138:SF5">
    <property type="entry name" value="METHIONYL-TRNA FORMYLTRANSFERASE, MITOCHONDRIAL"/>
    <property type="match status" value="1"/>
</dbReference>
<dbReference type="Pfam" id="PF02911">
    <property type="entry name" value="Formyl_trans_C"/>
    <property type="match status" value="1"/>
</dbReference>
<dbReference type="Pfam" id="PF00551">
    <property type="entry name" value="Formyl_trans_N"/>
    <property type="match status" value="1"/>
</dbReference>
<dbReference type="SUPFAM" id="SSF50486">
    <property type="entry name" value="FMT C-terminal domain-like"/>
    <property type="match status" value="1"/>
</dbReference>
<dbReference type="SUPFAM" id="SSF53328">
    <property type="entry name" value="Formyltransferase"/>
    <property type="match status" value="1"/>
</dbReference>
<feature type="chain" id="PRO_1000098395" description="Methionyl-tRNA formyltransferase">
    <location>
        <begin position="1"/>
        <end position="329"/>
    </location>
</feature>
<feature type="binding site" evidence="1">
    <location>
        <begin position="118"/>
        <end position="121"/>
    </location>
    <ligand>
        <name>(6S)-5,6,7,8-tetrahydrofolate</name>
        <dbReference type="ChEBI" id="CHEBI:57453"/>
    </ligand>
</feature>
<keyword id="KW-0648">Protein biosynthesis</keyword>
<keyword id="KW-1185">Reference proteome</keyword>
<keyword id="KW-0808">Transferase</keyword>
<accession>B1VDP0</accession>
<organism>
    <name type="scientific">Corynebacterium urealyticum (strain ATCC 43042 / DSM 7109)</name>
    <dbReference type="NCBI Taxonomy" id="504474"/>
    <lineage>
        <taxon>Bacteria</taxon>
        <taxon>Bacillati</taxon>
        <taxon>Actinomycetota</taxon>
        <taxon>Actinomycetes</taxon>
        <taxon>Mycobacteriales</taxon>
        <taxon>Corynebacteriaceae</taxon>
        <taxon>Corynebacterium</taxon>
    </lineage>
</organism>
<comment type="function">
    <text evidence="1">Attaches a formyl group to the free amino group of methionyl-tRNA(fMet). The formyl group appears to play a dual role in the initiator identity of N-formylmethionyl-tRNA by promoting its recognition by IF2 and preventing the misappropriation of this tRNA by the elongation apparatus.</text>
</comment>
<comment type="catalytic activity">
    <reaction evidence="1">
        <text>L-methionyl-tRNA(fMet) + (6R)-10-formyltetrahydrofolate = N-formyl-L-methionyl-tRNA(fMet) + (6S)-5,6,7,8-tetrahydrofolate + H(+)</text>
        <dbReference type="Rhea" id="RHEA:24380"/>
        <dbReference type="Rhea" id="RHEA-COMP:9952"/>
        <dbReference type="Rhea" id="RHEA-COMP:9953"/>
        <dbReference type="ChEBI" id="CHEBI:15378"/>
        <dbReference type="ChEBI" id="CHEBI:57453"/>
        <dbReference type="ChEBI" id="CHEBI:78530"/>
        <dbReference type="ChEBI" id="CHEBI:78844"/>
        <dbReference type="ChEBI" id="CHEBI:195366"/>
        <dbReference type="EC" id="2.1.2.9"/>
    </reaction>
</comment>
<comment type="similarity">
    <text evidence="1">Belongs to the Fmt family.</text>
</comment>